<accession>A4TH19</accession>
<reference key="1">
    <citation type="submission" date="2007-02" db="EMBL/GenBank/DDBJ databases">
        <title>Complete sequence of chromosome of Yersinia pestis Pestoides F.</title>
        <authorList>
            <consortium name="US DOE Joint Genome Institute"/>
            <person name="Copeland A."/>
            <person name="Lucas S."/>
            <person name="Lapidus A."/>
            <person name="Barry K."/>
            <person name="Detter J.C."/>
            <person name="Glavina del Rio T."/>
            <person name="Hammon N."/>
            <person name="Israni S."/>
            <person name="Dalin E."/>
            <person name="Tice H."/>
            <person name="Pitluck S."/>
            <person name="Di Bartolo G."/>
            <person name="Chain P."/>
            <person name="Malfatti S."/>
            <person name="Shin M."/>
            <person name="Vergez L."/>
            <person name="Schmutz J."/>
            <person name="Larimer F."/>
            <person name="Land M."/>
            <person name="Hauser L."/>
            <person name="Worsham P."/>
            <person name="Chu M."/>
            <person name="Bearden S."/>
            <person name="Garcia E."/>
            <person name="Richardson P."/>
        </authorList>
    </citation>
    <scope>NUCLEOTIDE SEQUENCE [LARGE SCALE GENOMIC DNA]</scope>
    <source>
        <strain>Pestoides F</strain>
    </source>
</reference>
<sequence>MSFMKEFREFAMRGNVVDLAVGVIIGAAFGRIVSSLVADIIMPPLGLLLGGVDFKQFHFVLRAAEGTIPAVVMNYGTFIQSIFDFVIVALAIFSAVKLMNKLRREKAEEEPATPPAPTTEEILLAEIRDLLKAQHTK</sequence>
<name>MSCL_YERPP</name>
<keyword id="KW-0997">Cell inner membrane</keyword>
<keyword id="KW-1003">Cell membrane</keyword>
<keyword id="KW-0407">Ion channel</keyword>
<keyword id="KW-0406">Ion transport</keyword>
<keyword id="KW-0472">Membrane</keyword>
<keyword id="KW-0812">Transmembrane</keyword>
<keyword id="KW-1133">Transmembrane helix</keyword>
<keyword id="KW-0813">Transport</keyword>
<proteinExistence type="inferred from homology"/>
<comment type="function">
    <text evidence="1">Channel that opens in response to stretch forces in the membrane lipid bilayer. May participate in the regulation of osmotic pressure changes within the cell.</text>
</comment>
<comment type="subunit">
    <text evidence="1">Homopentamer.</text>
</comment>
<comment type="subcellular location">
    <subcellularLocation>
        <location evidence="1">Cell inner membrane</location>
        <topology evidence="1">Multi-pass membrane protein</topology>
    </subcellularLocation>
</comment>
<comment type="similarity">
    <text evidence="1">Belongs to the MscL family.</text>
</comment>
<gene>
    <name evidence="1" type="primary">mscL</name>
    <name type="ordered locus">YPDSF_0160</name>
</gene>
<organism>
    <name type="scientific">Yersinia pestis (strain Pestoides F)</name>
    <dbReference type="NCBI Taxonomy" id="386656"/>
    <lineage>
        <taxon>Bacteria</taxon>
        <taxon>Pseudomonadati</taxon>
        <taxon>Pseudomonadota</taxon>
        <taxon>Gammaproteobacteria</taxon>
        <taxon>Enterobacterales</taxon>
        <taxon>Yersiniaceae</taxon>
        <taxon>Yersinia</taxon>
    </lineage>
</organism>
<dbReference type="EMBL" id="CP000668">
    <property type="protein sequence ID" value="ABP38582.1"/>
    <property type="molecule type" value="Genomic_DNA"/>
</dbReference>
<dbReference type="RefSeq" id="WP_002209017.1">
    <property type="nucleotide sequence ID" value="NZ_CP009715.1"/>
</dbReference>
<dbReference type="SMR" id="A4TH19"/>
<dbReference type="GeneID" id="57974366"/>
<dbReference type="KEGG" id="ypp:YPDSF_0160"/>
<dbReference type="GO" id="GO:0005886">
    <property type="term" value="C:plasma membrane"/>
    <property type="evidence" value="ECO:0007669"/>
    <property type="project" value="UniProtKB-SubCell"/>
</dbReference>
<dbReference type="GO" id="GO:0008381">
    <property type="term" value="F:mechanosensitive monoatomic ion channel activity"/>
    <property type="evidence" value="ECO:0007669"/>
    <property type="project" value="UniProtKB-UniRule"/>
</dbReference>
<dbReference type="FunFam" id="1.10.1200.120:FF:000001">
    <property type="entry name" value="Large-conductance mechanosensitive channel"/>
    <property type="match status" value="1"/>
</dbReference>
<dbReference type="Gene3D" id="1.10.1200.120">
    <property type="entry name" value="Large-conductance mechanosensitive channel, MscL, domain 1"/>
    <property type="match status" value="1"/>
</dbReference>
<dbReference type="HAMAP" id="MF_00115">
    <property type="entry name" value="MscL"/>
    <property type="match status" value="1"/>
</dbReference>
<dbReference type="InterPro" id="IPR019823">
    <property type="entry name" value="Mechanosensitive_channel_CS"/>
</dbReference>
<dbReference type="InterPro" id="IPR001185">
    <property type="entry name" value="MS_channel"/>
</dbReference>
<dbReference type="InterPro" id="IPR037673">
    <property type="entry name" value="MSC/AndL"/>
</dbReference>
<dbReference type="InterPro" id="IPR036019">
    <property type="entry name" value="MscL_channel"/>
</dbReference>
<dbReference type="NCBIfam" id="TIGR00220">
    <property type="entry name" value="mscL"/>
    <property type="match status" value="1"/>
</dbReference>
<dbReference type="NCBIfam" id="NF001841">
    <property type="entry name" value="PRK00567.1-1"/>
    <property type="match status" value="1"/>
</dbReference>
<dbReference type="NCBIfam" id="NF001843">
    <property type="entry name" value="PRK00567.1-4"/>
    <property type="match status" value="1"/>
</dbReference>
<dbReference type="PANTHER" id="PTHR30266:SF2">
    <property type="entry name" value="LARGE-CONDUCTANCE MECHANOSENSITIVE CHANNEL"/>
    <property type="match status" value="1"/>
</dbReference>
<dbReference type="PANTHER" id="PTHR30266">
    <property type="entry name" value="MECHANOSENSITIVE CHANNEL MSCL"/>
    <property type="match status" value="1"/>
</dbReference>
<dbReference type="Pfam" id="PF01741">
    <property type="entry name" value="MscL"/>
    <property type="match status" value="1"/>
</dbReference>
<dbReference type="PRINTS" id="PR01264">
    <property type="entry name" value="MECHCHANNEL"/>
</dbReference>
<dbReference type="SUPFAM" id="SSF81330">
    <property type="entry name" value="Gated mechanosensitive channel"/>
    <property type="match status" value="1"/>
</dbReference>
<dbReference type="PROSITE" id="PS01327">
    <property type="entry name" value="MSCL"/>
    <property type="match status" value="1"/>
</dbReference>
<protein>
    <recommendedName>
        <fullName evidence="1">Large-conductance mechanosensitive channel</fullName>
    </recommendedName>
</protein>
<evidence type="ECO:0000255" key="1">
    <source>
        <dbReference type="HAMAP-Rule" id="MF_00115"/>
    </source>
</evidence>
<feature type="chain" id="PRO_1000015437" description="Large-conductance mechanosensitive channel">
    <location>
        <begin position="1"/>
        <end position="137"/>
    </location>
</feature>
<feature type="transmembrane region" description="Helical" evidence="1">
    <location>
        <begin position="10"/>
        <end position="30"/>
    </location>
</feature>
<feature type="transmembrane region" description="Helical" evidence="1">
    <location>
        <begin position="76"/>
        <end position="96"/>
    </location>
</feature>